<reference key="1">
    <citation type="journal article" date="2002" name="Nucleic Acids Res.">
        <title>Genome sequence of Oceanobacillus iheyensis isolated from the Iheya Ridge and its unexpected adaptive capabilities to extreme environments.</title>
        <authorList>
            <person name="Takami H."/>
            <person name="Takaki Y."/>
            <person name="Uchiyama I."/>
        </authorList>
    </citation>
    <scope>NUCLEOTIDE SEQUENCE [LARGE SCALE GENOMIC DNA]</scope>
    <source>
        <strain>DSM 14371 / CIP 107618 / JCM 11309 / KCTC 3954 / HTE831</strain>
    </source>
</reference>
<proteinExistence type="inferred from homology"/>
<gene>
    <name evidence="1" type="primary">spx2</name>
    <name type="ordered locus">OB1363</name>
</gene>
<protein>
    <recommendedName>
        <fullName evidence="1">Global transcriptional regulator Spx 2</fullName>
    </recommendedName>
</protein>
<comment type="function">
    <text evidence="1">Global transcriptional regulator that plays a key role in stress response and exerts either positive or negative regulation of genes. Acts by interacting with the C-terminal domain of the alpha subunit of the RNA polymerase (RNAP). This interaction can enhance binding of RNAP to the promoter region of target genes and stimulate their transcription, or block interaction of RNAP with activator.</text>
</comment>
<comment type="subunit">
    <text evidence="1">Interacts with the C-terminal domain of the alpha subunit of the RNAP.</text>
</comment>
<comment type="subcellular location">
    <subcellularLocation>
        <location evidence="1">Cytoplasm</location>
    </subcellularLocation>
</comment>
<comment type="similarity">
    <text evidence="1">Belongs to the ArsC family. Spx subfamily.</text>
</comment>
<comment type="caution">
    <text evidence="2">Thr-13 is present instead of the conserved Cys which is potentially a redox-active site.</text>
</comment>
<dbReference type="EMBL" id="BA000028">
    <property type="protein sequence ID" value="BAC13319.1"/>
    <property type="molecule type" value="Genomic_DNA"/>
</dbReference>
<dbReference type="RefSeq" id="WP_011065769.1">
    <property type="nucleotide sequence ID" value="NC_004193.1"/>
</dbReference>
<dbReference type="SMR" id="Q8ERE2"/>
<dbReference type="STRING" id="221109.gene:10733603"/>
<dbReference type="KEGG" id="oih:OB1363"/>
<dbReference type="eggNOG" id="COG1393">
    <property type="taxonomic scope" value="Bacteria"/>
</dbReference>
<dbReference type="HOGENOM" id="CLU_116644_1_1_9"/>
<dbReference type="OrthoDB" id="9794155at2"/>
<dbReference type="PhylomeDB" id="Q8ERE2"/>
<dbReference type="Proteomes" id="UP000000822">
    <property type="component" value="Chromosome"/>
</dbReference>
<dbReference type="GO" id="GO:0005737">
    <property type="term" value="C:cytoplasm"/>
    <property type="evidence" value="ECO:0007669"/>
    <property type="project" value="UniProtKB-SubCell"/>
</dbReference>
<dbReference type="GO" id="GO:0045892">
    <property type="term" value="P:negative regulation of DNA-templated transcription"/>
    <property type="evidence" value="ECO:0007669"/>
    <property type="project" value="InterPro"/>
</dbReference>
<dbReference type="CDD" id="cd03032">
    <property type="entry name" value="ArsC_Spx"/>
    <property type="match status" value="1"/>
</dbReference>
<dbReference type="Gene3D" id="3.40.30.10">
    <property type="entry name" value="Glutaredoxin"/>
    <property type="match status" value="1"/>
</dbReference>
<dbReference type="HAMAP" id="MF_01132">
    <property type="entry name" value="Spx"/>
    <property type="match status" value="1"/>
</dbReference>
<dbReference type="InterPro" id="IPR006660">
    <property type="entry name" value="Arsenate_reductase-like"/>
</dbReference>
<dbReference type="InterPro" id="IPR023731">
    <property type="entry name" value="Spx"/>
</dbReference>
<dbReference type="InterPro" id="IPR036249">
    <property type="entry name" value="Thioredoxin-like_sf"/>
</dbReference>
<dbReference type="InterPro" id="IPR006504">
    <property type="entry name" value="Tscrpt_reg_Spx/MgsR"/>
</dbReference>
<dbReference type="NCBIfam" id="TIGR01617">
    <property type="entry name" value="arsC_related"/>
    <property type="match status" value="1"/>
</dbReference>
<dbReference type="NCBIfam" id="NF002459">
    <property type="entry name" value="PRK01655.1"/>
    <property type="match status" value="1"/>
</dbReference>
<dbReference type="PANTHER" id="PTHR30041">
    <property type="entry name" value="ARSENATE REDUCTASE"/>
    <property type="match status" value="1"/>
</dbReference>
<dbReference type="PANTHER" id="PTHR30041:SF7">
    <property type="entry name" value="GLOBAL TRANSCRIPTIONAL REGULATOR SPX"/>
    <property type="match status" value="1"/>
</dbReference>
<dbReference type="Pfam" id="PF03960">
    <property type="entry name" value="ArsC"/>
    <property type="match status" value="1"/>
</dbReference>
<dbReference type="SUPFAM" id="SSF52833">
    <property type="entry name" value="Thioredoxin-like"/>
    <property type="match status" value="1"/>
</dbReference>
<dbReference type="PROSITE" id="PS51353">
    <property type="entry name" value="ARSC"/>
    <property type="match status" value="1"/>
</dbReference>
<name>SPX2_OCEIH</name>
<keyword id="KW-0963">Cytoplasm</keyword>
<keyword id="KW-1185">Reference proteome</keyword>
<keyword id="KW-0804">Transcription</keyword>
<keyword id="KW-0805">Transcription regulation</keyword>
<sequence>MTVNIYGASCSSTRKARQWFKKHGIAYKERNILRQPLTINELQEILRMTVEGTDEIISTRSKIFKELNLNLDELPLQKLLELIHEHPRLLKSPILMDEKRFQVGYHEDDIRQFLPRKTREHLWLQWKLDLGLVKG</sequence>
<accession>Q8ERE2</accession>
<organism>
    <name type="scientific">Oceanobacillus iheyensis (strain DSM 14371 / CIP 107618 / JCM 11309 / KCTC 3954 / HTE831)</name>
    <dbReference type="NCBI Taxonomy" id="221109"/>
    <lineage>
        <taxon>Bacteria</taxon>
        <taxon>Bacillati</taxon>
        <taxon>Bacillota</taxon>
        <taxon>Bacilli</taxon>
        <taxon>Bacillales</taxon>
        <taxon>Bacillaceae</taxon>
        <taxon>Oceanobacillus</taxon>
    </lineage>
</organism>
<evidence type="ECO:0000255" key="1">
    <source>
        <dbReference type="HAMAP-Rule" id="MF_01132"/>
    </source>
</evidence>
<evidence type="ECO:0000305" key="2"/>
<feature type="chain" id="PRO_0000162561" description="Global transcriptional regulator Spx 2">
    <location>
        <begin position="1"/>
        <end position="135"/>
    </location>
</feature>
<feature type="active site" evidence="1">
    <location>
        <position position="10"/>
    </location>
</feature>